<evidence type="ECO:0000255" key="1">
    <source>
        <dbReference type="HAMAP-Rule" id="MF_00514"/>
    </source>
</evidence>
<evidence type="ECO:0000305" key="2"/>
<name>RK35_GUITH</name>
<organism>
    <name type="scientific">Guillardia theta</name>
    <name type="common">Cryptophyte</name>
    <name type="synonym">Cryptomonas phi</name>
    <dbReference type="NCBI Taxonomy" id="55529"/>
    <lineage>
        <taxon>Eukaryota</taxon>
        <taxon>Cryptophyceae</taxon>
        <taxon>Pyrenomonadales</taxon>
        <taxon>Geminigeraceae</taxon>
        <taxon>Guillardia</taxon>
    </lineage>
</organism>
<gene>
    <name evidence="1" type="primary">rpl35</name>
</gene>
<proteinExistence type="inferred from homology"/>
<geneLocation type="chloroplast"/>
<dbReference type="EMBL" id="AF041468">
    <property type="protein sequence ID" value="AAC35687.1"/>
    <property type="molecule type" value="Genomic_DNA"/>
</dbReference>
<dbReference type="RefSeq" id="NP_050753.1">
    <property type="nucleotide sequence ID" value="NC_000926.1"/>
</dbReference>
<dbReference type="SMR" id="O78496"/>
<dbReference type="GeneID" id="857058"/>
<dbReference type="HOGENOM" id="CLU_169643_4_3_1"/>
<dbReference type="OMA" id="AKHRSAY"/>
<dbReference type="GO" id="GO:0009507">
    <property type="term" value="C:chloroplast"/>
    <property type="evidence" value="ECO:0007669"/>
    <property type="project" value="UniProtKB-SubCell"/>
</dbReference>
<dbReference type="GO" id="GO:0015934">
    <property type="term" value="C:large ribosomal subunit"/>
    <property type="evidence" value="ECO:0007669"/>
    <property type="project" value="TreeGrafter"/>
</dbReference>
<dbReference type="GO" id="GO:0003735">
    <property type="term" value="F:structural constituent of ribosome"/>
    <property type="evidence" value="ECO:0007669"/>
    <property type="project" value="InterPro"/>
</dbReference>
<dbReference type="GO" id="GO:0006412">
    <property type="term" value="P:translation"/>
    <property type="evidence" value="ECO:0007669"/>
    <property type="project" value="UniProtKB-UniRule"/>
</dbReference>
<dbReference type="FunFam" id="4.10.410.60:FF:000001">
    <property type="entry name" value="50S ribosomal protein L35"/>
    <property type="match status" value="1"/>
</dbReference>
<dbReference type="Gene3D" id="4.10.410.60">
    <property type="match status" value="1"/>
</dbReference>
<dbReference type="HAMAP" id="MF_00514">
    <property type="entry name" value="Ribosomal_bL35"/>
    <property type="match status" value="1"/>
</dbReference>
<dbReference type="InterPro" id="IPR001706">
    <property type="entry name" value="Ribosomal_bL35"/>
</dbReference>
<dbReference type="InterPro" id="IPR021137">
    <property type="entry name" value="Ribosomal_bL35-like"/>
</dbReference>
<dbReference type="InterPro" id="IPR018265">
    <property type="entry name" value="Ribosomal_bL35_CS"/>
</dbReference>
<dbReference type="InterPro" id="IPR037229">
    <property type="entry name" value="Ribosomal_bL35_sf"/>
</dbReference>
<dbReference type="NCBIfam" id="TIGR00001">
    <property type="entry name" value="rpmI_bact"/>
    <property type="match status" value="1"/>
</dbReference>
<dbReference type="PANTHER" id="PTHR33343">
    <property type="entry name" value="54S RIBOSOMAL PROTEIN BL35M"/>
    <property type="match status" value="1"/>
</dbReference>
<dbReference type="PANTHER" id="PTHR33343:SF1">
    <property type="entry name" value="LARGE RIBOSOMAL SUBUNIT PROTEIN BL35M"/>
    <property type="match status" value="1"/>
</dbReference>
<dbReference type="Pfam" id="PF01632">
    <property type="entry name" value="Ribosomal_L35p"/>
    <property type="match status" value="1"/>
</dbReference>
<dbReference type="PRINTS" id="PR00064">
    <property type="entry name" value="RIBOSOMALL35"/>
</dbReference>
<dbReference type="SUPFAM" id="SSF143034">
    <property type="entry name" value="L35p-like"/>
    <property type="match status" value="1"/>
</dbReference>
<dbReference type="PROSITE" id="PS00936">
    <property type="entry name" value="RIBOSOMAL_L35"/>
    <property type="match status" value="1"/>
</dbReference>
<accession>O78496</accession>
<sequence length="66" mass="7981">MPKLKTRKSARKRFYISAKGKFVRKRAFKSHILEKKTSKRKRNLKRKMIVFKGENLALKTMLPYLR</sequence>
<feature type="chain" id="PRO_0000177467" description="Large ribosomal subunit protein bL35c">
    <location>
        <begin position="1"/>
        <end position="66"/>
    </location>
</feature>
<comment type="subcellular location">
    <subcellularLocation>
        <location>Plastid</location>
        <location>Chloroplast</location>
    </subcellularLocation>
</comment>
<comment type="similarity">
    <text evidence="1">Belongs to the bacterial ribosomal protein bL35 family.</text>
</comment>
<protein>
    <recommendedName>
        <fullName evidence="1">Large ribosomal subunit protein bL35c</fullName>
    </recommendedName>
    <alternativeName>
        <fullName evidence="2">50S ribosomal protein L35, chloroplastic</fullName>
    </alternativeName>
</protein>
<reference key="1">
    <citation type="journal article" date="1999" name="J. Mol. Evol.">
        <title>The plastid genome of the cryptophyte alga, Guillardia theta: complete sequence and conserved synteny groups confirm its common ancestry with red algae.</title>
        <authorList>
            <person name="Douglas S.E."/>
            <person name="Penny S.L."/>
        </authorList>
    </citation>
    <scope>NUCLEOTIDE SEQUENCE [LARGE SCALE GENOMIC DNA]</scope>
</reference>
<keyword id="KW-0150">Chloroplast</keyword>
<keyword id="KW-0934">Plastid</keyword>
<keyword id="KW-0687">Ribonucleoprotein</keyword>
<keyword id="KW-0689">Ribosomal protein</keyword>